<sequence length="578" mass="64497">MRVAVIGGGPGGLTTLKHLLEAHKFVGGDPVEAKLFEAEEGIGGTFLKRMYEDAELVSSKYLTAFSDFRAREDDPDYLPAARYLEYLGEYATAFDLWPYIQLSTTVTAVRRKGRSHVISYATQDGKEGSWLCDAVAVCSGLHVTPNIPSIKGIDKVPKSFHSSGFKSREQFGSDTTVVVLGTGETAMDIAHLAVTAPTKRVVICHRDGFSVVAKRTPSPVVFPSLASQLQSPNPPVPVDTYLHASHKWGNLPGNVFDSLVKQGMWLMTGTSAGYDQWVGGYPSPRWHTSNVIFTKSSKAMPYISKPYRKDTILQRLRSSIVQVPIPETHGRHIDIAPWPSHIDSEGVLHFIDNGRPEYKRMEEAEVVRPDVLVFGTGYTQRFDFLDSTYPSTSDLDVRDVWRRDEPSVGFIGFVRPGFGAIPPLAELQAQLWVLNLLAPERLQPLLPQDEPHYRLGMPSDARIKYGVSHDDYANQLAVDMNASPSFMDAVRIGSSRKEWWRLPLVWLLAAEFNTKFRLCGPWKWDGAVDVMSGELWDVVKRRGGLLKQIVLSGVPLVVFGSLHLVLWIFTSLFKPSRW</sequence>
<comment type="function">
    <text evidence="2">Monooxygenase; part of the gene cluster that mediates the biosynthesis of chlorflavonin, a fungal flavonoid with acetolactate synthase inhibitory activity (PubMed:36704842). Within the pathway, cfoE is responsible for the chlorination of the flavonoid skeleton at position C3' (PubMed:36704842). The pathway begins with the PKS-NRPS hybrid synthetase cfoA that uses benzoic acid or p-hydroxybenzoic acid as a starter unit with four rounds of chain elongation using malonyl-CoA to form the chalcone skeleton. Then, a new type of chalcone isomerase, cfoK, catalyzes the conversion of the chalcone into a flavanone by a histidine-mediated oxa-Michael addition mechanism. The desaturation of flavanone to flavone is catalyzed by a new type of flavone synthase, the flavin mononucleotide (FMN)-dependent oxidoreductase cfoJ. Monooxygenases cfoF, cfoG, and P450 cfoH are responsible for the hydroxylation of the flavonoid skeleton at sites C3, C8, and C2', respectively. Like cfoF, the dehydratase cfoI plays also a role in the hydroxylation of position C3. Methyltransferases cfoB, cfoC, and cfoD then catalyze the methylation of C7-OH, C8-OH, and C3-OH, respectively. Finally, the monooxygenase cfoE is responsible for the chlorination of flavonoid at position C3' (PubMed:36704842).</text>
</comment>
<comment type="cofactor">
    <cofactor evidence="4">
        <name>FAD</name>
        <dbReference type="ChEBI" id="CHEBI:57692"/>
    </cofactor>
</comment>
<comment type="pathway">
    <text evidence="2">Secondary metabolite biosynthesis; flavonoid biosynthesis.</text>
</comment>
<comment type="subcellular location">
    <subcellularLocation>
        <location evidence="1">Membrane</location>
        <topology evidence="1">Single-pass membrane protein</topology>
    </subcellularLocation>
</comment>
<comment type="disruption phenotype">
    <text evidence="2">Impairs the chlorination of flavonoid at position C3'.</text>
</comment>
<comment type="similarity">
    <text evidence="4">Belongs to the FMO family.</text>
</comment>
<protein>
    <recommendedName>
        <fullName evidence="3">Monooxygenase cfoE</fullName>
        <ecNumber evidence="2">1.-.-.-</ecNumber>
    </recommendedName>
    <alternativeName>
        <fullName evidence="3">Chlorflavonin biosynthesis cluster protein E</fullName>
    </alternativeName>
</protein>
<keyword id="KW-0274">FAD</keyword>
<keyword id="KW-0284">Flavonoid biosynthesis</keyword>
<keyword id="KW-0285">Flavoprotein</keyword>
<keyword id="KW-0472">Membrane</keyword>
<keyword id="KW-0503">Monooxygenase</keyword>
<keyword id="KW-0521">NADP</keyword>
<keyword id="KW-0560">Oxidoreductase</keyword>
<keyword id="KW-1185">Reference proteome</keyword>
<keyword id="KW-0812">Transmembrane</keyword>
<keyword id="KW-1133">Transmembrane helix</keyword>
<organism>
    <name type="scientific">Aspergillus candidus</name>
    <dbReference type="NCBI Taxonomy" id="41067"/>
    <lineage>
        <taxon>Eukaryota</taxon>
        <taxon>Fungi</taxon>
        <taxon>Dikarya</taxon>
        <taxon>Ascomycota</taxon>
        <taxon>Pezizomycotina</taxon>
        <taxon>Eurotiomycetes</taxon>
        <taxon>Eurotiomycetidae</taxon>
        <taxon>Eurotiales</taxon>
        <taxon>Aspergillaceae</taxon>
        <taxon>Aspergillus</taxon>
        <taxon>Aspergillus subgen. Circumdati</taxon>
    </lineage>
</organism>
<reference key="1">
    <citation type="submission" date="2017-12" db="EMBL/GenBank/DDBJ databases">
        <authorList>
            <consortium name="DOE Joint Genome Institute"/>
            <person name="Haridas S."/>
            <person name="Kjaerbolling I."/>
            <person name="Vesth T.C."/>
            <person name="Frisvad J.C."/>
            <person name="Nybo J.L."/>
            <person name="Theobald S."/>
            <person name="Kuo A."/>
            <person name="Bowyer P."/>
            <person name="Matsuda Y."/>
            <person name="Mondo S."/>
            <person name="Lyhne E.K."/>
            <person name="Kogle M.E."/>
            <person name="Clum A."/>
            <person name="Lipzen A."/>
            <person name="Salamov A."/>
            <person name="Ngan C.Y."/>
            <person name="Daum C."/>
            <person name="Chiniquy J."/>
            <person name="Barry K."/>
            <person name="LaButti K."/>
            <person name="Simmons B.A."/>
            <person name="Magnuson J.K."/>
            <person name="Mortensen U.H."/>
            <person name="Larsen T.O."/>
            <person name="Grigoriev I.V."/>
            <person name="Baker S.E."/>
            <person name="Andersen M.R."/>
            <person name="Nordberg H.P."/>
            <person name="Cantor M.N."/>
            <person name="Hua S.X."/>
        </authorList>
    </citation>
    <scope>NUCLEOTIDE SEQUENCE [LARGE SCALE GENOMIC DNA]</scope>
    <source>
        <strain>CBS 102.13</strain>
    </source>
</reference>
<reference key="2">
    <citation type="journal article" date="2023" name="Angew. Chem. Int. Ed.">
        <title>Discovery of a Unique Flavonoid Biosynthesis Mechanism in Fungi by Genome Mining.</title>
        <authorList>
            <person name="Zhang W."/>
            <person name="Zhang X."/>
            <person name="Feng D."/>
            <person name="Liang Y."/>
            <person name="Wu Z."/>
            <person name="Du S."/>
            <person name="Zhou Y."/>
            <person name="Geng C."/>
            <person name="Men P."/>
            <person name="Fu C."/>
            <person name="Huang X."/>
            <person name="Lu X."/>
        </authorList>
    </citation>
    <scope>FUNCTION</scope>
    <scope>DISRUPTION PHENOTYPE</scope>
    <scope>PATHWAY</scope>
</reference>
<evidence type="ECO:0000255" key="1"/>
<evidence type="ECO:0000269" key="2">
    <source>
    </source>
</evidence>
<evidence type="ECO:0000303" key="3">
    <source>
    </source>
</evidence>
<evidence type="ECO:0000305" key="4"/>
<accession>A0A2I2F2K8</accession>
<feature type="chain" id="PRO_0000459550" description="Monooxygenase cfoE">
    <location>
        <begin position="1"/>
        <end position="578"/>
    </location>
</feature>
<feature type="transmembrane region" description="Helical" evidence="1">
    <location>
        <begin position="549"/>
        <end position="569"/>
    </location>
</feature>
<proteinExistence type="inferred from homology"/>
<dbReference type="EC" id="1.-.-.-" evidence="2"/>
<dbReference type="EMBL" id="KZ559171">
    <property type="protein sequence ID" value="PLB34857.1"/>
    <property type="molecule type" value="Genomic_DNA"/>
</dbReference>
<dbReference type="SMR" id="A0A2I2F2K8"/>
<dbReference type="STRING" id="41067.A0A2I2F2K8"/>
<dbReference type="OrthoDB" id="66881at2759"/>
<dbReference type="UniPathway" id="UPA00154"/>
<dbReference type="Proteomes" id="UP000234585">
    <property type="component" value="Unassembled WGS sequence"/>
</dbReference>
<dbReference type="GO" id="GO:0016020">
    <property type="term" value="C:membrane"/>
    <property type="evidence" value="ECO:0007669"/>
    <property type="project" value="UniProtKB-SubCell"/>
</dbReference>
<dbReference type="GO" id="GO:0050660">
    <property type="term" value="F:flavin adenine dinucleotide binding"/>
    <property type="evidence" value="ECO:0007669"/>
    <property type="project" value="InterPro"/>
</dbReference>
<dbReference type="GO" id="GO:0004499">
    <property type="term" value="F:N,N-dimethylaniline monooxygenase activity"/>
    <property type="evidence" value="ECO:0007669"/>
    <property type="project" value="InterPro"/>
</dbReference>
<dbReference type="GO" id="GO:0050661">
    <property type="term" value="F:NADP binding"/>
    <property type="evidence" value="ECO:0007669"/>
    <property type="project" value="InterPro"/>
</dbReference>
<dbReference type="GO" id="GO:0009813">
    <property type="term" value="P:flavonoid biosynthetic process"/>
    <property type="evidence" value="ECO:0007669"/>
    <property type="project" value="UniProtKB-UniPathway"/>
</dbReference>
<dbReference type="CDD" id="cd05191">
    <property type="entry name" value="NAD_bind_amino_acid_DH"/>
    <property type="match status" value="1"/>
</dbReference>
<dbReference type="Gene3D" id="3.50.50.60">
    <property type="entry name" value="FAD/NAD(P)-binding domain"/>
    <property type="match status" value="1"/>
</dbReference>
<dbReference type="InterPro" id="IPR036188">
    <property type="entry name" value="FAD/NAD-bd_sf"/>
</dbReference>
<dbReference type="InterPro" id="IPR000960">
    <property type="entry name" value="Flavin_mOase"/>
</dbReference>
<dbReference type="InterPro" id="IPR020946">
    <property type="entry name" value="Flavin_mOase-like"/>
</dbReference>
<dbReference type="InterPro" id="IPR050346">
    <property type="entry name" value="FMO-like"/>
</dbReference>
<dbReference type="PANTHER" id="PTHR23023">
    <property type="entry name" value="DIMETHYLANILINE MONOOXYGENASE"/>
    <property type="match status" value="1"/>
</dbReference>
<dbReference type="Pfam" id="PF00743">
    <property type="entry name" value="FMO-like"/>
    <property type="match status" value="1"/>
</dbReference>
<dbReference type="PIRSF" id="PIRSF000332">
    <property type="entry name" value="FMO"/>
    <property type="match status" value="1"/>
</dbReference>
<dbReference type="PRINTS" id="PR00370">
    <property type="entry name" value="FMOXYGENASE"/>
</dbReference>
<dbReference type="SUPFAM" id="SSF51905">
    <property type="entry name" value="FAD/NAD(P)-binding domain"/>
    <property type="match status" value="1"/>
</dbReference>
<name>CFOE_ASPCN</name>
<gene>
    <name evidence="3" type="primary">cfoE</name>
    <name type="ORF">BDW47DRAFT_111384</name>
</gene>